<comment type="function">
    <text evidence="1">Binds to 23S rRNA.</text>
</comment>
<comment type="subunit">
    <text evidence="1">Part of the 50S ribosomal subunit.</text>
</comment>
<comment type="subcellular location">
    <subcellularLocation>
        <location>Plastid</location>
        <location>Chloroplast</location>
    </subcellularLocation>
</comment>
<comment type="similarity">
    <text evidence="1">Belongs to the universal ribosomal protein uL14 family.</text>
</comment>
<proteinExistence type="inferred from homology"/>
<geneLocation type="chloroplast"/>
<gene>
    <name evidence="1" type="primary">rpl14</name>
</gene>
<dbReference type="EMBL" id="EU262890">
    <property type="protein sequence ID" value="ABX10073.1"/>
    <property type="molecule type" value="Genomic_DNA"/>
</dbReference>
<dbReference type="RefSeq" id="YP_001687319.1">
    <property type="nucleotide sequence ID" value="NC_010360.2"/>
</dbReference>
<dbReference type="SMR" id="B0Z580"/>
<dbReference type="GeneID" id="5955360"/>
<dbReference type="GO" id="GO:0009507">
    <property type="term" value="C:chloroplast"/>
    <property type="evidence" value="ECO:0007669"/>
    <property type="project" value="UniProtKB-SubCell"/>
</dbReference>
<dbReference type="GO" id="GO:0022625">
    <property type="term" value="C:cytosolic large ribosomal subunit"/>
    <property type="evidence" value="ECO:0007669"/>
    <property type="project" value="TreeGrafter"/>
</dbReference>
<dbReference type="GO" id="GO:0070180">
    <property type="term" value="F:large ribosomal subunit rRNA binding"/>
    <property type="evidence" value="ECO:0007669"/>
    <property type="project" value="TreeGrafter"/>
</dbReference>
<dbReference type="GO" id="GO:0003735">
    <property type="term" value="F:structural constituent of ribosome"/>
    <property type="evidence" value="ECO:0007669"/>
    <property type="project" value="InterPro"/>
</dbReference>
<dbReference type="GO" id="GO:0006412">
    <property type="term" value="P:translation"/>
    <property type="evidence" value="ECO:0007669"/>
    <property type="project" value="UniProtKB-UniRule"/>
</dbReference>
<dbReference type="CDD" id="cd00337">
    <property type="entry name" value="Ribosomal_uL14"/>
    <property type="match status" value="1"/>
</dbReference>
<dbReference type="FunFam" id="2.40.150.20:FF:000002">
    <property type="entry name" value="50S ribosomal protein L14, chloroplastic"/>
    <property type="match status" value="1"/>
</dbReference>
<dbReference type="Gene3D" id="2.40.150.20">
    <property type="entry name" value="Ribosomal protein L14"/>
    <property type="match status" value="1"/>
</dbReference>
<dbReference type="HAMAP" id="MF_01367">
    <property type="entry name" value="Ribosomal_uL14"/>
    <property type="match status" value="1"/>
</dbReference>
<dbReference type="InterPro" id="IPR000218">
    <property type="entry name" value="Ribosomal_uL14"/>
</dbReference>
<dbReference type="InterPro" id="IPR005745">
    <property type="entry name" value="Ribosomal_uL14_bac-type"/>
</dbReference>
<dbReference type="InterPro" id="IPR019972">
    <property type="entry name" value="Ribosomal_uL14_CS"/>
</dbReference>
<dbReference type="InterPro" id="IPR036853">
    <property type="entry name" value="Ribosomal_uL14_sf"/>
</dbReference>
<dbReference type="NCBIfam" id="TIGR01067">
    <property type="entry name" value="rplN_bact"/>
    <property type="match status" value="1"/>
</dbReference>
<dbReference type="PANTHER" id="PTHR11761">
    <property type="entry name" value="50S/60S RIBOSOMAL PROTEIN L14/L23"/>
    <property type="match status" value="1"/>
</dbReference>
<dbReference type="PANTHER" id="PTHR11761:SF3">
    <property type="entry name" value="LARGE RIBOSOMAL SUBUNIT PROTEIN UL14M"/>
    <property type="match status" value="1"/>
</dbReference>
<dbReference type="Pfam" id="PF00238">
    <property type="entry name" value="Ribosomal_L14"/>
    <property type="match status" value="1"/>
</dbReference>
<dbReference type="SMART" id="SM01374">
    <property type="entry name" value="Ribosomal_L14"/>
    <property type="match status" value="1"/>
</dbReference>
<dbReference type="SUPFAM" id="SSF50193">
    <property type="entry name" value="Ribosomal protein L14"/>
    <property type="match status" value="1"/>
</dbReference>
<dbReference type="PROSITE" id="PS00049">
    <property type="entry name" value="RIBOSOMAL_L14"/>
    <property type="match status" value="1"/>
</dbReference>
<evidence type="ECO:0000255" key="1">
    <source>
        <dbReference type="HAMAP-Rule" id="MF_01367"/>
    </source>
</evidence>
<evidence type="ECO:0000305" key="2"/>
<accession>B0Z580</accession>
<reference key="1">
    <citation type="journal article" date="2008" name="Nucleic Acids Res.">
        <title>The complete nucleotide sequences of the five genetically distinct plastid genomes of Oenothera, subsection Oenothera: I. Sequence evaluation and plastome evolution.</title>
        <authorList>
            <person name="Greiner S."/>
            <person name="Wang X."/>
            <person name="Rauwolf U."/>
            <person name="Silber M.V."/>
            <person name="Mayer K."/>
            <person name="Meurer J."/>
            <person name="Haberer G."/>
            <person name="Herrmann R.G."/>
        </authorList>
    </citation>
    <scope>NUCLEOTIDE SEQUENCE [LARGE SCALE GENOMIC DNA]</scope>
    <source>
        <strain>cv. Rr-lamarckiana Sweden</strain>
    </source>
</reference>
<name>RK14_OENGL</name>
<feature type="chain" id="PRO_0000355896" description="Large ribosomal subunit protein uL14c">
    <location>
        <begin position="1"/>
        <end position="122"/>
    </location>
</feature>
<keyword id="KW-0150">Chloroplast</keyword>
<keyword id="KW-0934">Plastid</keyword>
<keyword id="KW-0687">Ribonucleoprotein</keyword>
<keyword id="KW-0689">Ribosomal protein</keyword>
<keyword id="KW-0694">RNA-binding</keyword>
<keyword id="KW-0699">rRNA-binding</keyword>
<protein>
    <recommendedName>
        <fullName evidence="1">Large ribosomal subunit protein uL14c</fullName>
    </recommendedName>
    <alternativeName>
        <fullName evidence="2">50S ribosomal protein L14, chloroplastic</fullName>
    </alternativeName>
</protein>
<organism>
    <name type="scientific">Oenothera glazioviana</name>
    <name type="common">Large-flowered evening primrose</name>
    <name type="synonym">Oenothera erythrosepala</name>
    <dbReference type="NCBI Taxonomy" id="482428"/>
    <lineage>
        <taxon>Eukaryota</taxon>
        <taxon>Viridiplantae</taxon>
        <taxon>Streptophyta</taxon>
        <taxon>Embryophyta</taxon>
        <taxon>Tracheophyta</taxon>
        <taxon>Spermatophyta</taxon>
        <taxon>Magnoliopsida</taxon>
        <taxon>eudicotyledons</taxon>
        <taxon>Gunneridae</taxon>
        <taxon>Pentapetalae</taxon>
        <taxon>rosids</taxon>
        <taxon>malvids</taxon>
        <taxon>Myrtales</taxon>
        <taxon>Onagraceae</taxon>
        <taxon>Onagroideae</taxon>
        <taxon>Onagreae</taxon>
        <taxon>Oenothera</taxon>
    </lineage>
</organism>
<sequence length="122" mass="13428">MIQPQTRLNVADNSGARELMCIRIIGASNRRYAHIGDIIVAVIKEALPSTSLERSEVVRAVIVRTCKELKCDDGIIIRYDDNAAVVIDQEGNPKGTRVFGAIAHELRELSFTKIVSLAPEVL</sequence>